<dbReference type="EC" id="3.1.3.16" evidence="1"/>
<dbReference type="EC" id="3.1.3.48" evidence="1"/>
<dbReference type="EMBL" id="AF167296">
    <property type="protein sequence ID" value="AAD46656.1"/>
    <property type="molecule type" value="mRNA"/>
</dbReference>
<dbReference type="RefSeq" id="NP_990169.1">
    <property type="nucleotide sequence ID" value="NM_204838.1"/>
</dbReference>
<dbReference type="SMR" id="Q9PW71"/>
<dbReference type="FunCoup" id="Q9PW71">
    <property type="interactions" value="225"/>
</dbReference>
<dbReference type="STRING" id="9031.ENSGALP00000037153"/>
<dbReference type="PaxDb" id="9031-ENSGALP00000037153"/>
<dbReference type="GeneID" id="395642"/>
<dbReference type="KEGG" id="gga:395642"/>
<dbReference type="CTD" id="1846"/>
<dbReference type="VEuPathDB" id="HostDB:geneid_395642"/>
<dbReference type="eggNOG" id="KOG1716">
    <property type="taxonomic scope" value="Eukaryota"/>
</dbReference>
<dbReference type="InParanoid" id="Q9PW71"/>
<dbReference type="OrthoDB" id="165342at2759"/>
<dbReference type="PhylomeDB" id="Q9PW71"/>
<dbReference type="Reactome" id="R-GGA-437980">
    <property type="pathway name" value="Activated TAK1 mediates p38 MAP kinase phosphorylation"/>
</dbReference>
<dbReference type="Reactome" id="R-GGA-437986">
    <property type="pathway name" value="Activated TAK1 mediates Jun kinases (JNK) phosphorylation and activation"/>
</dbReference>
<dbReference type="PRO" id="PR:Q9PW71"/>
<dbReference type="Proteomes" id="UP000000539">
    <property type="component" value="Unassembled WGS sequence"/>
</dbReference>
<dbReference type="GO" id="GO:0005737">
    <property type="term" value="C:cytoplasm"/>
    <property type="evidence" value="ECO:0000318"/>
    <property type="project" value="GO_Central"/>
</dbReference>
<dbReference type="GO" id="GO:0005634">
    <property type="term" value="C:nucleus"/>
    <property type="evidence" value="ECO:0000250"/>
    <property type="project" value="UniProtKB"/>
</dbReference>
<dbReference type="GO" id="GO:1990439">
    <property type="term" value="F:MAP kinase serine/threonine phosphatase activity"/>
    <property type="evidence" value="ECO:0000250"/>
    <property type="project" value="UniProtKB"/>
</dbReference>
<dbReference type="GO" id="GO:0017017">
    <property type="term" value="F:MAP kinase tyrosine/serine/threonine phosphatase activity"/>
    <property type="evidence" value="ECO:0007669"/>
    <property type="project" value="InterPro"/>
</dbReference>
<dbReference type="GO" id="GO:0016791">
    <property type="term" value="F:phosphatase activity"/>
    <property type="evidence" value="ECO:0000250"/>
    <property type="project" value="UniProtKB"/>
</dbReference>
<dbReference type="GO" id="GO:0004721">
    <property type="term" value="F:phosphoprotein phosphatase activity"/>
    <property type="evidence" value="ECO:0000318"/>
    <property type="project" value="GO_Central"/>
</dbReference>
<dbReference type="GO" id="GO:0004725">
    <property type="term" value="F:protein tyrosine phosphatase activity"/>
    <property type="evidence" value="ECO:0000250"/>
    <property type="project" value="UniProtKB"/>
</dbReference>
<dbReference type="GO" id="GO:0008330">
    <property type="term" value="F:protein tyrosine/threonine phosphatase activity"/>
    <property type="evidence" value="ECO:0000250"/>
    <property type="project" value="UniProtKB"/>
</dbReference>
<dbReference type="GO" id="GO:0016311">
    <property type="term" value="P:dephosphorylation"/>
    <property type="evidence" value="ECO:0000250"/>
    <property type="project" value="UniProtKB"/>
</dbReference>
<dbReference type="GO" id="GO:0001706">
    <property type="term" value="P:endoderm formation"/>
    <property type="evidence" value="ECO:0000318"/>
    <property type="project" value="GO_Central"/>
</dbReference>
<dbReference type="GO" id="GO:0070373">
    <property type="term" value="P:negative regulation of ERK1 and ERK2 cascade"/>
    <property type="evidence" value="ECO:0000250"/>
    <property type="project" value="UniProtKB"/>
</dbReference>
<dbReference type="GO" id="GO:0043409">
    <property type="term" value="P:negative regulation of MAPK cascade"/>
    <property type="evidence" value="ECO:0000318"/>
    <property type="project" value="GO_Central"/>
</dbReference>
<dbReference type="GO" id="GO:0007165">
    <property type="term" value="P:signal transduction"/>
    <property type="evidence" value="ECO:0000318"/>
    <property type="project" value="GO_Central"/>
</dbReference>
<dbReference type="CDD" id="cd14640">
    <property type="entry name" value="DSP_DUSP4"/>
    <property type="match status" value="1"/>
</dbReference>
<dbReference type="CDD" id="cd01446">
    <property type="entry name" value="DSP_MapKP"/>
    <property type="match status" value="1"/>
</dbReference>
<dbReference type="FunFam" id="3.90.190.10:FF:000015">
    <property type="entry name" value="Dual specificity phosphatase 4"/>
    <property type="match status" value="1"/>
</dbReference>
<dbReference type="Gene3D" id="3.90.190.10">
    <property type="entry name" value="Protein tyrosine phosphatase superfamily"/>
    <property type="match status" value="1"/>
</dbReference>
<dbReference type="Gene3D" id="3.40.250.10">
    <property type="entry name" value="Rhodanese-like domain"/>
    <property type="match status" value="1"/>
</dbReference>
<dbReference type="InterPro" id="IPR000340">
    <property type="entry name" value="Dual-sp_phosphatase_cat-dom"/>
</dbReference>
<dbReference type="InterPro" id="IPR008343">
    <property type="entry name" value="MKP"/>
</dbReference>
<dbReference type="InterPro" id="IPR029021">
    <property type="entry name" value="Prot-tyrosine_phosphatase-like"/>
</dbReference>
<dbReference type="InterPro" id="IPR001763">
    <property type="entry name" value="Rhodanese-like_dom"/>
</dbReference>
<dbReference type="InterPro" id="IPR036873">
    <property type="entry name" value="Rhodanese-like_dom_sf"/>
</dbReference>
<dbReference type="InterPro" id="IPR016130">
    <property type="entry name" value="Tyr_Pase_AS"/>
</dbReference>
<dbReference type="InterPro" id="IPR003595">
    <property type="entry name" value="Tyr_Pase_cat"/>
</dbReference>
<dbReference type="InterPro" id="IPR000387">
    <property type="entry name" value="Tyr_Pase_dom"/>
</dbReference>
<dbReference type="InterPro" id="IPR020422">
    <property type="entry name" value="TYR_PHOSPHATASE_DUAL_dom"/>
</dbReference>
<dbReference type="PANTHER" id="PTHR10159">
    <property type="entry name" value="DUAL SPECIFICITY PROTEIN PHOSPHATASE"/>
    <property type="match status" value="1"/>
</dbReference>
<dbReference type="PANTHER" id="PTHR10159:SF111">
    <property type="entry name" value="DUAL SPECIFICITY PROTEIN PHOSPHATASE 4"/>
    <property type="match status" value="1"/>
</dbReference>
<dbReference type="Pfam" id="PF00782">
    <property type="entry name" value="DSPc"/>
    <property type="match status" value="1"/>
</dbReference>
<dbReference type="Pfam" id="PF00581">
    <property type="entry name" value="Rhodanese"/>
    <property type="match status" value="1"/>
</dbReference>
<dbReference type="PIRSF" id="PIRSF000939">
    <property type="entry name" value="MAPK_Ptase"/>
    <property type="match status" value="1"/>
</dbReference>
<dbReference type="PRINTS" id="PR01764">
    <property type="entry name" value="MAPKPHPHTASE"/>
</dbReference>
<dbReference type="SMART" id="SM00195">
    <property type="entry name" value="DSPc"/>
    <property type="match status" value="1"/>
</dbReference>
<dbReference type="SMART" id="SM00404">
    <property type="entry name" value="PTPc_motif"/>
    <property type="match status" value="1"/>
</dbReference>
<dbReference type="SMART" id="SM00450">
    <property type="entry name" value="RHOD"/>
    <property type="match status" value="1"/>
</dbReference>
<dbReference type="SUPFAM" id="SSF52799">
    <property type="entry name" value="(Phosphotyrosine protein) phosphatases II"/>
    <property type="match status" value="1"/>
</dbReference>
<dbReference type="SUPFAM" id="SSF52821">
    <property type="entry name" value="Rhodanese/Cell cycle control phosphatase"/>
    <property type="match status" value="1"/>
</dbReference>
<dbReference type="PROSITE" id="PS50206">
    <property type="entry name" value="RHODANESE_3"/>
    <property type="match status" value="1"/>
</dbReference>
<dbReference type="PROSITE" id="PS00383">
    <property type="entry name" value="TYR_PHOSPHATASE_1"/>
    <property type="match status" value="1"/>
</dbReference>
<dbReference type="PROSITE" id="PS50056">
    <property type="entry name" value="TYR_PHOSPHATASE_2"/>
    <property type="match status" value="1"/>
</dbReference>
<dbReference type="PROSITE" id="PS50054">
    <property type="entry name" value="TYR_PHOSPHATASE_DUAL"/>
    <property type="match status" value="1"/>
</dbReference>
<sequence>MVAPEGLREMEGSALRRLVGREEASGGRCLLLDCRPFLAHSAGHIRGALNVRCNTIVRRRAKGAVSLEQILPAEGEVRARLRAGLYTAVVLYDERSPRAEALRDDSTVALVLRALRRDMARADIRLLAGGYERFASEYPEFCAKTKTLSSISPPSSAESLDLGFSSCGTPLHDQGGPVEILPFLYLGSAYHAARRDMLDALGITALLNVSSDCPNHFEGHYQYKCIPVEDNHKADISSWFMEAIEYIDSVKECCGRVLVHCQAGISRSATICLAYLMMKKRVKLEKAFEFVKQRRSIISPNFSFMGQLLQFESQVLATSCAVEAASPSGTLRERGKATSTPTSQFVFSFPVSVGVHATPSSLPYLHSPITTSPSC</sequence>
<feature type="chain" id="PRO_0000094801" description="Dual specificity protein phosphatase 4">
    <location>
        <begin position="1"/>
        <end position="375"/>
    </location>
</feature>
<feature type="domain" description="Rhodanese" evidence="3">
    <location>
        <begin position="25"/>
        <end position="143"/>
    </location>
</feature>
<feature type="domain" description="Tyrosine-protein phosphatase" evidence="2">
    <location>
        <begin position="176"/>
        <end position="317"/>
    </location>
</feature>
<feature type="active site" description="Phosphocysteine intermediate" evidence="2">
    <location>
        <position position="261"/>
    </location>
</feature>
<proteinExistence type="evidence at transcript level"/>
<evidence type="ECO:0000250" key="1">
    <source>
        <dbReference type="UniProtKB" id="Q13115"/>
    </source>
</evidence>
<evidence type="ECO:0000255" key="2">
    <source>
        <dbReference type="PROSITE-ProRule" id="PRU00160"/>
    </source>
</evidence>
<evidence type="ECO:0000255" key="3">
    <source>
        <dbReference type="PROSITE-ProRule" id="PRU00173"/>
    </source>
</evidence>
<evidence type="ECO:0000255" key="4">
    <source>
        <dbReference type="PROSITE-ProRule" id="PRU10044"/>
    </source>
</evidence>
<evidence type="ECO:0000305" key="5"/>
<comment type="function">
    <text evidence="1">Regulates mitogenic signal transduction by dephosphorylating both Thr and Tyr residues on MAP kinases ERK1 and ERK2.</text>
</comment>
<comment type="catalytic activity">
    <reaction evidence="4">
        <text>O-phospho-L-tyrosyl-[protein] + H2O = L-tyrosyl-[protein] + phosphate</text>
        <dbReference type="Rhea" id="RHEA:10684"/>
        <dbReference type="Rhea" id="RHEA-COMP:10136"/>
        <dbReference type="Rhea" id="RHEA-COMP:20101"/>
        <dbReference type="ChEBI" id="CHEBI:15377"/>
        <dbReference type="ChEBI" id="CHEBI:43474"/>
        <dbReference type="ChEBI" id="CHEBI:46858"/>
        <dbReference type="ChEBI" id="CHEBI:61978"/>
        <dbReference type="EC" id="3.1.3.48"/>
    </reaction>
</comment>
<comment type="catalytic activity">
    <reaction evidence="1">
        <text>O-phospho-L-seryl-[protein] + H2O = L-seryl-[protein] + phosphate</text>
        <dbReference type="Rhea" id="RHEA:20629"/>
        <dbReference type="Rhea" id="RHEA-COMP:9863"/>
        <dbReference type="Rhea" id="RHEA-COMP:11604"/>
        <dbReference type="ChEBI" id="CHEBI:15377"/>
        <dbReference type="ChEBI" id="CHEBI:29999"/>
        <dbReference type="ChEBI" id="CHEBI:43474"/>
        <dbReference type="ChEBI" id="CHEBI:83421"/>
        <dbReference type="EC" id="3.1.3.16"/>
    </reaction>
</comment>
<comment type="catalytic activity">
    <reaction evidence="1">
        <text>O-phospho-L-threonyl-[protein] + H2O = L-threonyl-[protein] + phosphate</text>
        <dbReference type="Rhea" id="RHEA:47004"/>
        <dbReference type="Rhea" id="RHEA-COMP:11060"/>
        <dbReference type="Rhea" id="RHEA-COMP:11605"/>
        <dbReference type="ChEBI" id="CHEBI:15377"/>
        <dbReference type="ChEBI" id="CHEBI:30013"/>
        <dbReference type="ChEBI" id="CHEBI:43474"/>
        <dbReference type="ChEBI" id="CHEBI:61977"/>
        <dbReference type="EC" id="3.1.3.16"/>
    </reaction>
</comment>
<comment type="subcellular location">
    <subcellularLocation>
        <location evidence="1">Nucleus</location>
    </subcellularLocation>
</comment>
<comment type="similarity">
    <text evidence="5">Belongs to the protein-tyrosine phosphatase family. Non-receptor class dual specificity subfamily.</text>
</comment>
<keyword id="KW-0378">Hydrolase</keyword>
<keyword id="KW-0539">Nucleus</keyword>
<keyword id="KW-0904">Protein phosphatase</keyword>
<keyword id="KW-1185">Reference proteome</keyword>
<organism>
    <name type="scientific">Gallus gallus</name>
    <name type="common">Chicken</name>
    <dbReference type="NCBI Taxonomy" id="9031"/>
    <lineage>
        <taxon>Eukaryota</taxon>
        <taxon>Metazoa</taxon>
        <taxon>Chordata</taxon>
        <taxon>Craniata</taxon>
        <taxon>Vertebrata</taxon>
        <taxon>Euteleostomi</taxon>
        <taxon>Archelosauria</taxon>
        <taxon>Archosauria</taxon>
        <taxon>Dinosauria</taxon>
        <taxon>Saurischia</taxon>
        <taxon>Theropoda</taxon>
        <taxon>Coelurosauria</taxon>
        <taxon>Aves</taxon>
        <taxon>Neognathae</taxon>
        <taxon>Galloanserae</taxon>
        <taxon>Galliformes</taxon>
        <taxon>Phasianidae</taxon>
        <taxon>Phasianinae</taxon>
        <taxon>Gallus</taxon>
    </lineage>
</organism>
<name>DUS4_CHICK</name>
<accession>Q9PW71</accession>
<protein>
    <recommendedName>
        <fullName>Dual specificity protein phosphatase 4</fullName>
        <ecNumber evidence="1">3.1.3.16</ecNumber>
        <ecNumber evidence="1">3.1.3.48</ecNumber>
    </recommendedName>
    <alternativeName>
        <fullName>Mitogen-activated protein kinase phosphatase 2</fullName>
        <shortName>MAP kinase phosphatase 2</shortName>
        <shortName>MKP-2</shortName>
    </alternativeName>
</protein>
<gene>
    <name type="primary">DUSP4</name>
    <name type="synonym">MKP2</name>
</gene>
<reference key="1">
    <citation type="journal article" date="2000" name="Oncogene">
        <title>Identification and characterization of genes upregulated in cells transformed by v-Jun.</title>
        <authorList>
            <person name="Fu S.-L."/>
            <person name="Waha A."/>
            <person name="Vogt P.K."/>
        </authorList>
    </citation>
    <scope>NUCLEOTIDE SEQUENCE [MRNA]</scope>
    <source>
        <strain>White leghorn</strain>
    </source>
</reference>